<name>CH60A_DROME</name>
<protein>
    <recommendedName>
        <fullName evidence="5">Heat shock protein 60A</fullName>
    </recommendedName>
</protein>
<feature type="transit peptide" description="Mitochondrion" evidence="2">
    <location>
        <begin position="1"/>
        <end position="57"/>
    </location>
</feature>
<feature type="chain" id="PRO_0000005031" description="Heat shock protein 60A">
    <location>
        <begin position="58"/>
        <end position="573"/>
    </location>
</feature>
<feature type="sequence conflict" description="In Ref. 1; CAA67720." evidence="4" ref="1">
    <original>NA</original>
    <variation>KS</variation>
    <location>
        <begin position="261"/>
        <end position="262"/>
    </location>
</feature>
<feature type="sequence conflict" description="In Ref. 5; CAA70287." evidence="4" ref="5">
    <original>GIVF</original>
    <variation>ARVG</variation>
    <location>
        <begin position="318"/>
        <end position="321"/>
    </location>
</feature>
<feature type="sequence conflict" description="In Ref. 1; CAA67720." evidence="4" ref="1">
    <original>KDQ</original>
    <variation>RTK</variation>
    <location>
        <begin position="371"/>
        <end position="373"/>
    </location>
</feature>
<feature type="sequence conflict" description="In Ref. 1; CAA67720." evidence="4" ref="1">
    <original>K</original>
    <variation>E</variation>
    <location>
        <position position="414"/>
    </location>
</feature>
<feature type="sequence conflict" description="In Ref. 1; CAA67720." evidence="4" ref="1">
    <original>ALLRC</original>
    <variation>RLVRL</variation>
    <location>
        <begin position="439"/>
        <end position="443"/>
    </location>
</feature>
<feature type="sequence conflict" description="In Ref. 1; CAA67720." evidence="4" ref="1">
    <original>L</original>
    <variation>S</variation>
    <location>
        <position position="468"/>
    </location>
</feature>
<feature type="sequence conflict" description="In Ref. 4; AAQ23524 and 5; CAA70287." evidence="4" ref="4 5">
    <original>N</original>
    <variation>T</variation>
    <location>
        <position position="492"/>
    </location>
</feature>
<accession>O02649</accession>
<accession>A4V4A0</accession>
<accession>P35380</accession>
<accession>Q6NR71</accession>
<accession>Q95026</accession>
<accession>Q9VZ31</accession>
<reference key="1">
    <citation type="submission" date="1998-10" db="EMBL/GenBank/DDBJ databases">
        <title>The D. melanogaster homologue of the hsp60 is an essential gene and is differentially expressed during fly development.</title>
        <authorList>
            <person name="Kozlova T."/>
            <person name="Reynaud E."/>
            <person name="Perezgasga L."/>
            <person name="Zurita M."/>
        </authorList>
    </citation>
    <scope>NUCLEOTIDE SEQUENCE [MRNA]</scope>
    <source>
        <strain>Oregon-R</strain>
    </source>
</reference>
<reference key="2">
    <citation type="journal article" date="2000" name="Science">
        <title>The genome sequence of Drosophila melanogaster.</title>
        <authorList>
            <person name="Adams M.D."/>
            <person name="Celniker S.E."/>
            <person name="Holt R.A."/>
            <person name="Evans C.A."/>
            <person name="Gocayne J.D."/>
            <person name="Amanatides P.G."/>
            <person name="Scherer S.E."/>
            <person name="Li P.W."/>
            <person name="Hoskins R.A."/>
            <person name="Galle R.F."/>
            <person name="George R.A."/>
            <person name="Lewis S.E."/>
            <person name="Richards S."/>
            <person name="Ashburner M."/>
            <person name="Henderson S.N."/>
            <person name="Sutton G.G."/>
            <person name="Wortman J.R."/>
            <person name="Yandell M.D."/>
            <person name="Zhang Q."/>
            <person name="Chen L.X."/>
            <person name="Brandon R.C."/>
            <person name="Rogers Y.-H.C."/>
            <person name="Blazej R.G."/>
            <person name="Champe M."/>
            <person name="Pfeiffer B.D."/>
            <person name="Wan K.H."/>
            <person name="Doyle C."/>
            <person name="Baxter E.G."/>
            <person name="Helt G."/>
            <person name="Nelson C.R."/>
            <person name="Miklos G.L.G."/>
            <person name="Abril J.F."/>
            <person name="Agbayani A."/>
            <person name="An H.-J."/>
            <person name="Andrews-Pfannkoch C."/>
            <person name="Baldwin D."/>
            <person name="Ballew R.M."/>
            <person name="Basu A."/>
            <person name="Baxendale J."/>
            <person name="Bayraktaroglu L."/>
            <person name="Beasley E.M."/>
            <person name="Beeson K.Y."/>
            <person name="Benos P.V."/>
            <person name="Berman B.P."/>
            <person name="Bhandari D."/>
            <person name="Bolshakov S."/>
            <person name="Borkova D."/>
            <person name="Botchan M.R."/>
            <person name="Bouck J."/>
            <person name="Brokstein P."/>
            <person name="Brottier P."/>
            <person name="Burtis K.C."/>
            <person name="Busam D.A."/>
            <person name="Butler H."/>
            <person name="Cadieu E."/>
            <person name="Center A."/>
            <person name="Chandra I."/>
            <person name="Cherry J.M."/>
            <person name="Cawley S."/>
            <person name="Dahlke C."/>
            <person name="Davenport L.B."/>
            <person name="Davies P."/>
            <person name="de Pablos B."/>
            <person name="Delcher A."/>
            <person name="Deng Z."/>
            <person name="Mays A.D."/>
            <person name="Dew I."/>
            <person name="Dietz S.M."/>
            <person name="Dodson K."/>
            <person name="Doup L.E."/>
            <person name="Downes M."/>
            <person name="Dugan-Rocha S."/>
            <person name="Dunkov B.C."/>
            <person name="Dunn P."/>
            <person name="Durbin K.J."/>
            <person name="Evangelista C.C."/>
            <person name="Ferraz C."/>
            <person name="Ferriera S."/>
            <person name="Fleischmann W."/>
            <person name="Fosler C."/>
            <person name="Gabrielian A.E."/>
            <person name="Garg N.S."/>
            <person name="Gelbart W.M."/>
            <person name="Glasser K."/>
            <person name="Glodek A."/>
            <person name="Gong F."/>
            <person name="Gorrell J.H."/>
            <person name="Gu Z."/>
            <person name="Guan P."/>
            <person name="Harris M."/>
            <person name="Harris N.L."/>
            <person name="Harvey D.A."/>
            <person name="Heiman T.J."/>
            <person name="Hernandez J.R."/>
            <person name="Houck J."/>
            <person name="Hostin D."/>
            <person name="Houston K.A."/>
            <person name="Howland T.J."/>
            <person name="Wei M.-H."/>
            <person name="Ibegwam C."/>
            <person name="Jalali M."/>
            <person name="Kalush F."/>
            <person name="Karpen G.H."/>
            <person name="Ke Z."/>
            <person name="Kennison J.A."/>
            <person name="Ketchum K.A."/>
            <person name="Kimmel B.E."/>
            <person name="Kodira C.D."/>
            <person name="Kraft C.L."/>
            <person name="Kravitz S."/>
            <person name="Kulp D."/>
            <person name="Lai Z."/>
            <person name="Lasko P."/>
            <person name="Lei Y."/>
            <person name="Levitsky A.A."/>
            <person name="Li J.H."/>
            <person name="Li Z."/>
            <person name="Liang Y."/>
            <person name="Lin X."/>
            <person name="Liu X."/>
            <person name="Mattei B."/>
            <person name="McIntosh T.C."/>
            <person name="McLeod M.P."/>
            <person name="McPherson D."/>
            <person name="Merkulov G."/>
            <person name="Milshina N.V."/>
            <person name="Mobarry C."/>
            <person name="Morris J."/>
            <person name="Moshrefi A."/>
            <person name="Mount S.M."/>
            <person name="Moy M."/>
            <person name="Murphy B."/>
            <person name="Murphy L."/>
            <person name="Muzny D.M."/>
            <person name="Nelson D.L."/>
            <person name="Nelson D.R."/>
            <person name="Nelson K.A."/>
            <person name="Nixon K."/>
            <person name="Nusskern D.R."/>
            <person name="Pacleb J.M."/>
            <person name="Palazzolo M."/>
            <person name="Pittman G.S."/>
            <person name="Pan S."/>
            <person name="Pollard J."/>
            <person name="Puri V."/>
            <person name="Reese M.G."/>
            <person name="Reinert K."/>
            <person name="Remington K."/>
            <person name="Saunders R.D.C."/>
            <person name="Scheeler F."/>
            <person name="Shen H."/>
            <person name="Shue B.C."/>
            <person name="Siden-Kiamos I."/>
            <person name="Simpson M."/>
            <person name="Skupski M.P."/>
            <person name="Smith T.J."/>
            <person name="Spier E."/>
            <person name="Spradling A.C."/>
            <person name="Stapleton M."/>
            <person name="Strong R."/>
            <person name="Sun E."/>
            <person name="Svirskas R."/>
            <person name="Tector C."/>
            <person name="Turner R."/>
            <person name="Venter E."/>
            <person name="Wang A.H."/>
            <person name="Wang X."/>
            <person name="Wang Z.-Y."/>
            <person name="Wassarman D.A."/>
            <person name="Weinstock G.M."/>
            <person name="Weissenbach J."/>
            <person name="Williams S.M."/>
            <person name="Woodage T."/>
            <person name="Worley K.C."/>
            <person name="Wu D."/>
            <person name="Yang S."/>
            <person name="Yao Q.A."/>
            <person name="Ye J."/>
            <person name="Yeh R.-F."/>
            <person name="Zaveri J.S."/>
            <person name="Zhan M."/>
            <person name="Zhang G."/>
            <person name="Zhao Q."/>
            <person name="Zheng L."/>
            <person name="Zheng X.H."/>
            <person name="Zhong F.N."/>
            <person name="Zhong W."/>
            <person name="Zhou X."/>
            <person name="Zhu S.C."/>
            <person name="Zhu X."/>
            <person name="Smith H.O."/>
            <person name="Gibbs R.A."/>
            <person name="Myers E.W."/>
            <person name="Rubin G.M."/>
            <person name="Venter J.C."/>
        </authorList>
    </citation>
    <scope>NUCLEOTIDE SEQUENCE [LARGE SCALE GENOMIC DNA]</scope>
    <source>
        <strain>Berkeley</strain>
    </source>
</reference>
<reference key="3">
    <citation type="journal article" date="2002" name="Genome Biol.">
        <title>Annotation of the Drosophila melanogaster euchromatic genome: a systematic review.</title>
        <authorList>
            <person name="Misra S."/>
            <person name="Crosby M.A."/>
            <person name="Mungall C.J."/>
            <person name="Matthews B.B."/>
            <person name="Campbell K.S."/>
            <person name="Hradecky P."/>
            <person name="Huang Y."/>
            <person name="Kaminker J.S."/>
            <person name="Millburn G.H."/>
            <person name="Prochnik S.E."/>
            <person name="Smith C.D."/>
            <person name="Tupy J.L."/>
            <person name="Whitfield E.J."/>
            <person name="Bayraktaroglu L."/>
            <person name="Berman B.P."/>
            <person name="Bettencourt B.R."/>
            <person name="Celniker S.E."/>
            <person name="de Grey A.D.N.J."/>
            <person name="Drysdale R.A."/>
            <person name="Harris N.L."/>
            <person name="Richter J."/>
            <person name="Russo S."/>
            <person name="Schroeder A.J."/>
            <person name="Shu S.Q."/>
            <person name="Stapleton M."/>
            <person name="Yamada C."/>
            <person name="Ashburner M."/>
            <person name="Gelbart W.M."/>
            <person name="Rubin G.M."/>
            <person name="Lewis S.E."/>
        </authorList>
    </citation>
    <scope>GENOME REANNOTATION</scope>
    <source>
        <strain>Berkeley</strain>
    </source>
</reference>
<reference key="4">
    <citation type="submission" date="2003-08" db="EMBL/GenBank/DDBJ databases">
        <authorList>
            <person name="Stapleton M."/>
            <person name="Brokstein P."/>
            <person name="Hong L."/>
            <person name="Agbayani A."/>
            <person name="Carlson J.W."/>
            <person name="Champe M."/>
            <person name="Chavez C."/>
            <person name="Dorsett V."/>
            <person name="Dresnek D."/>
            <person name="Farfan D."/>
            <person name="Frise E."/>
            <person name="George R.A."/>
            <person name="Gonzalez M."/>
            <person name="Guarin H."/>
            <person name="Kronmiller B."/>
            <person name="Li P.W."/>
            <person name="Liao G."/>
            <person name="Miranda A."/>
            <person name="Mungall C.J."/>
            <person name="Nunoo J."/>
            <person name="Pacleb J.M."/>
            <person name="Paragas V."/>
            <person name="Park S."/>
            <person name="Patel S."/>
            <person name="Phouanenavong S."/>
            <person name="Wan K.H."/>
            <person name="Yu C."/>
            <person name="Lewis S.E."/>
            <person name="Rubin G.M."/>
            <person name="Celniker S.E."/>
        </authorList>
    </citation>
    <scope>NUCLEOTIDE SEQUENCE [LARGE SCALE MRNA]</scope>
    <source>
        <strain>Berkeley</strain>
        <tissue>Embryo</tissue>
    </source>
</reference>
<reference key="5">
    <citation type="journal article" date="1999" name="Mol. Gen. Genet.">
        <title>Identification of nuclear genes encoding mitochondrial proteins: isolation of a collection of D. melanogaster cDNAs homologous to sequences in the Human Gene Index database.</title>
        <authorList>
            <person name="Caggese C."/>
            <person name="Ragone G."/>
            <person name="Perrini B."/>
            <person name="Moschetti R."/>
            <person name="de Pinto V."/>
            <person name="Caizzi R."/>
            <person name="Barsanti P."/>
        </authorList>
    </citation>
    <scope>NUCLEOTIDE SEQUENCE [MRNA] OF 318-573</scope>
    <source>
        <tissue>Ovary</tissue>
    </source>
</reference>
<reference key="6">
    <citation type="journal article" date="1993" name="Exp. Cell Res.">
        <title>Identification of Drosophila wing imaginal disc proteins by two-dimensional gel analysis and microsequencing.</title>
        <authorList>
            <person name="Santaren J.F."/>
            <person name="van Damme J."/>
            <person name="Puype M."/>
            <person name="Vandekerckhove J."/>
            <person name="Garcia-Bellido A."/>
        </authorList>
    </citation>
    <scope>PROTEIN SEQUENCE OF 58-68</scope>
    <source>
        <strain>Vallecas</strain>
        <tissue>Wing imaginal disk</tissue>
    </source>
</reference>
<comment type="function">
    <text evidence="1">Prevents misfolding and promotes the refolding and proper assembly of unfolded polypeptides generated under stress conditions.</text>
</comment>
<comment type="subcellular location">
    <subcellularLocation>
        <location evidence="1">Mitochondrion matrix</location>
    </subcellularLocation>
</comment>
<comment type="similarity">
    <text evidence="4">Belongs to the chaperonin (HSP60) family.</text>
</comment>
<organism>
    <name type="scientific">Drosophila melanogaster</name>
    <name type="common">Fruit fly</name>
    <dbReference type="NCBI Taxonomy" id="7227"/>
    <lineage>
        <taxon>Eukaryota</taxon>
        <taxon>Metazoa</taxon>
        <taxon>Ecdysozoa</taxon>
        <taxon>Arthropoda</taxon>
        <taxon>Hexapoda</taxon>
        <taxon>Insecta</taxon>
        <taxon>Pterygota</taxon>
        <taxon>Neoptera</taxon>
        <taxon>Endopterygota</taxon>
        <taxon>Diptera</taxon>
        <taxon>Brachycera</taxon>
        <taxon>Muscomorpha</taxon>
        <taxon>Ephydroidea</taxon>
        <taxon>Drosophilidae</taxon>
        <taxon>Drosophila</taxon>
        <taxon>Sophophora</taxon>
    </lineage>
</organism>
<dbReference type="EMBL" id="X99341">
    <property type="protein sequence ID" value="CAA67720.1"/>
    <property type="molecule type" value="mRNA"/>
</dbReference>
<dbReference type="EMBL" id="AE014298">
    <property type="protein sequence ID" value="AAF47998.1"/>
    <property type="molecule type" value="Genomic_DNA"/>
</dbReference>
<dbReference type="EMBL" id="AE014298">
    <property type="protein sequence ID" value="AAF47999.1"/>
    <property type="molecule type" value="Genomic_DNA"/>
</dbReference>
<dbReference type="EMBL" id="BT010206">
    <property type="protein sequence ID" value="AAQ23524.1"/>
    <property type="molecule type" value="mRNA"/>
</dbReference>
<dbReference type="EMBL" id="Y09066">
    <property type="protein sequence ID" value="CAA70287.1"/>
    <property type="molecule type" value="mRNA"/>
</dbReference>
<dbReference type="RefSeq" id="NP_511115.2">
    <property type="nucleotide sequence ID" value="NM_078560.3"/>
</dbReference>
<dbReference type="RefSeq" id="NP_727489.1">
    <property type="nucleotide sequence ID" value="NM_167266.1"/>
</dbReference>
<dbReference type="SMR" id="O02649"/>
<dbReference type="BioGRID" id="58460">
    <property type="interactions" value="63"/>
</dbReference>
<dbReference type="DIP" id="DIP-20404N"/>
<dbReference type="FunCoup" id="O02649">
    <property type="interactions" value="1701"/>
</dbReference>
<dbReference type="IntAct" id="O02649">
    <property type="interactions" value="30"/>
</dbReference>
<dbReference type="STRING" id="7227.FBpp0073290"/>
<dbReference type="MoonProt" id="O02649"/>
<dbReference type="GlyGen" id="O02649">
    <property type="glycosylation" value="1 site"/>
</dbReference>
<dbReference type="PaxDb" id="7227-FBpp0073290"/>
<dbReference type="DNASU" id="32045"/>
<dbReference type="EnsemblMetazoa" id="FBtr0073434">
    <property type="protein sequence ID" value="FBpp0073290"/>
    <property type="gene ID" value="FBgn0015245"/>
</dbReference>
<dbReference type="EnsemblMetazoa" id="FBtr0073435">
    <property type="protein sequence ID" value="FBpp0073291"/>
    <property type="gene ID" value="FBgn0015245"/>
</dbReference>
<dbReference type="GeneID" id="32045"/>
<dbReference type="KEGG" id="dme:Dmel_CG12101"/>
<dbReference type="AGR" id="FB:FBgn0015245"/>
<dbReference type="CTD" id="32045"/>
<dbReference type="FlyBase" id="FBgn0015245">
    <property type="gene designation" value="Hsp60A"/>
</dbReference>
<dbReference type="VEuPathDB" id="VectorBase:FBgn0015245"/>
<dbReference type="eggNOG" id="KOG0356">
    <property type="taxonomic scope" value="Eukaryota"/>
</dbReference>
<dbReference type="GeneTree" id="ENSGT00390000005727"/>
<dbReference type="HOGENOM" id="CLU_016503_3_0_1"/>
<dbReference type="InParanoid" id="O02649"/>
<dbReference type="OMA" id="TDTDKME"/>
<dbReference type="OrthoDB" id="1733909at2759"/>
<dbReference type="PhylomeDB" id="O02649"/>
<dbReference type="Reactome" id="R-DME-9837999">
    <property type="pathway name" value="Mitochondrial protein degradation"/>
</dbReference>
<dbReference type="BioGRID-ORCS" id="32045">
    <property type="hits" value="0 hits in 1 CRISPR screen"/>
</dbReference>
<dbReference type="ChiTaRS" id="Hsp60">
    <property type="organism name" value="fly"/>
</dbReference>
<dbReference type="GenomeRNAi" id="32045"/>
<dbReference type="PRO" id="PR:O02649"/>
<dbReference type="Proteomes" id="UP000000803">
    <property type="component" value="Chromosome X"/>
</dbReference>
<dbReference type="Bgee" id="FBgn0015245">
    <property type="expression patterns" value="Expressed in oocyte and 238 other cell types or tissues"/>
</dbReference>
<dbReference type="ExpressionAtlas" id="O02649">
    <property type="expression patterns" value="baseline and differential"/>
</dbReference>
<dbReference type="GO" id="GO:0005743">
    <property type="term" value="C:mitochondrial inner membrane"/>
    <property type="evidence" value="ECO:0000314"/>
    <property type="project" value="FlyBase"/>
</dbReference>
<dbReference type="GO" id="GO:0005759">
    <property type="term" value="C:mitochondrial matrix"/>
    <property type="evidence" value="ECO:0000318"/>
    <property type="project" value="GO_Central"/>
</dbReference>
<dbReference type="GO" id="GO:0005739">
    <property type="term" value="C:mitochondrion"/>
    <property type="evidence" value="ECO:0000314"/>
    <property type="project" value="FlyBase"/>
</dbReference>
<dbReference type="GO" id="GO:0005524">
    <property type="term" value="F:ATP binding"/>
    <property type="evidence" value="ECO:0007669"/>
    <property type="project" value="UniProtKB-KW"/>
</dbReference>
<dbReference type="GO" id="GO:0016887">
    <property type="term" value="F:ATP hydrolysis activity"/>
    <property type="evidence" value="ECO:0000250"/>
    <property type="project" value="FlyBase"/>
</dbReference>
<dbReference type="GO" id="GO:0140662">
    <property type="term" value="F:ATP-dependent protein folding chaperone"/>
    <property type="evidence" value="ECO:0007669"/>
    <property type="project" value="InterPro"/>
</dbReference>
<dbReference type="GO" id="GO:0051087">
    <property type="term" value="F:protein-folding chaperone binding"/>
    <property type="evidence" value="ECO:0000318"/>
    <property type="project" value="GO_Central"/>
</dbReference>
<dbReference type="GO" id="GO:0008637">
    <property type="term" value="P:apoptotic mitochondrial changes"/>
    <property type="evidence" value="ECO:0000318"/>
    <property type="project" value="GO_Central"/>
</dbReference>
<dbReference type="GO" id="GO:0034605">
    <property type="term" value="P:cellular response to heat"/>
    <property type="evidence" value="ECO:0000270"/>
    <property type="project" value="FlyBase"/>
</dbReference>
<dbReference type="GO" id="GO:0034514">
    <property type="term" value="P:mitochondrial unfolded protein response"/>
    <property type="evidence" value="ECO:0000318"/>
    <property type="project" value="GO_Central"/>
</dbReference>
<dbReference type="GO" id="GO:0007005">
    <property type="term" value="P:mitochondrion organization"/>
    <property type="evidence" value="ECO:0000315"/>
    <property type="project" value="FlyBase"/>
</dbReference>
<dbReference type="GO" id="GO:0006457">
    <property type="term" value="P:protein folding"/>
    <property type="evidence" value="ECO:0000318"/>
    <property type="project" value="GO_Central"/>
</dbReference>
<dbReference type="GO" id="GO:0045041">
    <property type="term" value="P:protein import into mitochondrial intermembrane space"/>
    <property type="evidence" value="ECO:0000318"/>
    <property type="project" value="GO_Central"/>
</dbReference>
<dbReference type="GO" id="GO:0042026">
    <property type="term" value="P:protein refolding"/>
    <property type="evidence" value="ECO:0007669"/>
    <property type="project" value="InterPro"/>
</dbReference>
<dbReference type="CDD" id="cd03344">
    <property type="entry name" value="GroEL"/>
    <property type="match status" value="1"/>
</dbReference>
<dbReference type="FunFam" id="3.50.7.10:FF:000001">
    <property type="entry name" value="60 kDa chaperonin"/>
    <property type="match status" value="1"/>
</dbReference>
<dbReference type="FunFam" id="1.10.560.10:FF:000031">
    <property type="entry name" value="60 kDa heat shock protein, mitochondrial"/>
    <property type="match status" value="1"/>
</dbReference>
<dbReference type="FunFam" id="3.30.260.10:FF:000018">
    <property type="entry name" value="Heat shock protein 60"/>
    <property type="match status" value="1"/>
</dbReference>
<dbReference type="Gene3D" id="3.50.7.10">
    <property type="entry name" value="GroEL"/>
    <property type="match status" value="1"/>
</dbReference>
<dbReference type="Gene3D" id="1.10.560.10">
    <property type="entry name" value="GroEL-like equatorial domain"/>
    <property type="match status" value="1"/>
</dbReference>
<dbReference type="Gene3D" id="3.30.260.10">
    <property type="entry name" value="TCP-1-like chaperonin intermediate domain"/>
    <property type="match status" value="1"/>
</dbReference>
<dbReference type="HAMAP" id="MF_00600">
    <property type="entry name" value="CH60"/>
    <property type="match status" value="1"/>
</dbReference>
<dbReference type="InterPro" id="IPR018370">
    <property type="entry name" value="Chaperonin_Cpn60_CS"/>
</dbReference>
<dbReference type="InterPro" id="IPR001844">
    <property type="entry name" value="Cpn60/GroEL"/>
</dbReference>
<dbReference type="InterPro" id="IPR002423">
    <property type="entry name" value="Cpn60/GroEL/TCP-1"/>
</dbReference>
<dbReference type="InterPro" id="IPR027409">
    <property type="entry name" value="GroEL-like_apical_dom_sf"/>
</dbReference>
<dbReference type="InterPro" id="IPR027413">
    <property type="entry name" value="GROEL-like_equatorial_sf"/>
</dbReference>
<dbReference type="InterPro" id="IPR027410">
    <property type="entry name" value="TCP-1-like_intermed_sf"/>
</dbReference>
<dbReference type="NCBIfam" id="TIGR02348">
    <property type="entry name" value="GroEL"/>
    <property type="match status" value="1"/>
</dbReference>
<dbReference type="NCBIfam" id="NF000592">
    <property type="entry name" value="PRK00013.1"/>
    <property type="match status" value="1"/>
</dbReference>
<dbReference type="NCBIfam" id="NF009487">
    <property type="entry name" value="PRK12849.1"/>
    <property type="match status" value="1"/>
</dbReference>
<dbReference type="NCBIfam" id="NF009488">
    <property type="entry name" value="PRK12850.1"/>
    <property type="match status" value="1"/>
</dbReference>
<dbReference type="NCBIfam" id="NF009489">
    <property type="entry name" value="PRK12851.1"/>
    <property type="match status" value="1"/>
</dbReference>
<dbReference type="PANTHER" id="PTHR45633">
    <property type="entry name" value="60 KDA HEAT SHOCK PROTEIN, MITOCHONDRIAL"/>
    <property type="match status" value="1"/>
</dbReference>
<dbReference type="Pfam" id="PF00118">
    <property type="entry name" value="Cpn60_TCP1"/>
    <property type="match status" value="1"/>
</dbReference>
<dbReference type="PRINTS" id="PR00298">
    <property type="entry name" value="CHAPERONIN60"/>
</dbReference>
<dbReference type="SUPFAM" id="SSF52029">
    <property type="entry name" value="GroEL apical domain-like"/>
    <property type="match status" value="1"/>
</dbReference>
<dbReference type="SUPFAM" id="SSF48592">
    <property type="entry name" value="GroEL equatorial domain-like"/>
    <property type="match status" value="1"/>
</dbReference>
<dbReference type="SUPFAM" id="SSF54849">
    <property type="entry name" value="GroEL-intermediate domain like"/>
    <property type="match status" value="1"/>
</dbReference>
<dbReference type="PROSITE" id="PS00296">
    <property type="entry name" value="CHAPERONINS_CPN60"/>
    <property type="match status" value="1"/>
</dbReference>
<keyword id="KW-0067">ATP-binding</keyword>
<keyword id="KW-0143">Chaperone</keyword>
<keyword id="KW-0903">Direct protein sequencing</keyword>
<keyword id="KW-0496">Mitochondrion</keyword>
<keyword id="KW-0547">Nucleotide-binding</keyword>
<keyword id="KW-1185">Reference proteome</keyword>
<keyword id="KW-0809">Transit peptide</keyword>
<gene>
    <name evidence="5" type="primary">Hsp60A</name>
    <name evidence="3" type="synonym">hsp60</name>
    <name evidence="5" type="ORF">CG12101</name>
</gene>
<proteinExistence type="evidence at protein level"/>
<sequence length="573" mass="60809">MFRLPVSLARSSISRQLAMRGYAKDVRFGPEVRAMMLQGVDVLADAVAVTMGPKGRNVIIEQSWGSPKITKDGVTVAKSIELKDKFQNIGAKLVQDVANNTNEEAGDGTTTATVLARAIAKEGFEKISKGANPVEIRRGVMLAVETVKDNLKTMSRPVSTPEEIAQVATISANGDQAIGNLISEAMKKVGRDGVITVKDGKTLTDELEVIEGMKFDRGYISPYFINSSKGAKVEFQDALLLLSEKKISSVQSIIPALELANAQRKPLVIIAEDIDGEALSTLVVNRLKIGLQVAAVKAPGFGDNRKSTLTDMAIASGGIVFGDDADLVKLEDVKVSDLGQVGEVVITKDDTLLLKGKGKKDDVLRRANQIKDQIEDTTSEYEKEKLQERLARLASGVALLRVGGSSEVEVNEKKDRVHDALNATRAAVEEGIVPGGGTALLRCIEKLEGVETTNEDQKLGVEIVRRALRMPCMTIAKNAGVDGAMVVAKVENQAGDYGYDALKGEYGNLIEKGIIDPTKVVRTAITDASGVASLLTTAEAVVTEIPKEDGAPAMPGMGGMGGMGGMGGMGGMM</sequence>
<evidence type="ECO:0000250" key="1"/>
<evidence type="ECO:0000269" key="2">
    <source>
    </source>
</evidence>
<evidence type="ECO:0000303" key="3">
    <source ref="1"/>
</evidence>
<evidence type="ECO:0000305" key="4"/>
<evidence type="ECO:0000312" key="5">
    <source>
        <dbReference type="FlyBase" id="FBgn0015245"/>
    </source>
</evidence>